<accession>B9DRT5</accession>
<gene>
    <name evidence="1" type="primary">atpG</name>
    <name type="ordered locus">SUB0671</name>
</gene>
<reference key="1">
    <citation type="journal article" date="2009" name="BMC Genomics">
        <title>Evidence for niche adaptation in the genome of the bovine pathogen Streptococcus uberis.</title>
        <authorList>
            <person name="Ward P.N."/>
            <person name="Holden M.T.G."/>
            <person name="Leigh J.A."/>
            <person name="Lennard N."/>
            <person name="Bignell A."/>
            <person name="Barron A."/>
            <person name="Clark L."/>
            <person name="Quail M.A."/>
            <person name="Woodward J."/>
            <person name="Barrell B.G."/>
            <person name="Egan S.A."/>
            <person name="Field T.R."/>
            <person name="Maskell D."/>
            <person name="Kehoe M."/>
            <person name="Dowson C.G."/>
            <person name="Chanter N."/>
            <person name="Whatmore A.M."/>
            <person name="Bentley S.D."/>
            <person name="Parkhill J."/>
        </authorList>
    </citation>
    <scope>NUCLEOTIDE SEQUENCE [LARGE SCALE GENOMIC DNA]</scope>
    <source>
        <strain>ATCC BAA-854 / 0140J</strain>
    </source>
</reference>
<protein>
    <recommendedName>
        <fullName evidence="1">ATP synthase gamma chain</fullName>
    </recommendedName>
    <alternativeName>
        <fullName evidence="1">ATP synthase F1 sector gamma subunit</fullName>
    </alternativeName>
    <alternativeName>
        <fullName evidence="1">F-ATPase gamma subunit</fullName>
    </alternativeName>
</protein>
<dbReference type="EMBL" id="AM946015">
    <property type="protein sequence ID" value="CAR41558.1"/>
    <property type="molecule type" value="Genomic_DNA"/>
</dbReference>
<dbReference type="RefSeq" id="WP_012658189.1">
    <property type="nucleotide sequence ID" value="NC_012004.1"/>
</dbReference>
<dbReference type="SMR" id="B9DRT5"/>
<dbReference type="STRING" id="218495.SUB0671"/>
<dbReference type="KEGG" id="sub:SUB0671"/>
<dbReference type="eggNOG" id="COG0224">
    <property type="taxonomic scope" value="Bacteria"/>
</dbReference>
<dbReference type="HOGENOM" id="CLU_050669_0_1_9"/>
<dbReference type="OrthoDB" id="9812769at2"/>
<dbReference type="Proteomes" id="UP000000449">
    <property type="component" value="Chromosome"/>
</dbReference>
<dbReference type="GO" id="GO:0005886">
    <property type="term" value="C:plasma membrane"/>
    <property type="evidence" value="ECO:0007669"/>
    <property type="project" value="UniProtKB-SubCell"/>
</dbReference>
<dbReference type="GO" id="GO:0045259">
    <property type="term" value="C:proton-transporting ATP synthase complex"/>
    <property type="evidence" value="ECO:0007669"/>
    <property type="project" value="UniProtKB-KW"/>
</dbReference>
<dbReference type="GO" id="GO:0005524">
    <property type="term" value="F:ATP binding"/>
    <property type="evidence" value="ECO:0007669"/>
    <property type="project" value="UniProtKB-UniRule"/>
</dbReference>
<dbReference type="GO" id="GO:0046933">
    <property type="term" value="F:proton-transporting ATP synthase activity, rotational mechanism"/>
    <property type="evidence" value="ECO:0007669"/>
    <property type="project" value="UniProtKB-UniRule"/>
</dbReference>
<dbReference type="GO" id="GO:0042777">
    <property type="term" value="P:proton motive force-driven plasma membrane ATP synthesis"/>
    <property type="evidence" value="ECO:0007669"/>
    <property type="project" value="UniProtKB-UniRule"/>
</dbReference>
<dbReference type="CDD" id="cd12151">
    <property type="entry name" value="F1-ATPase_gamma"/>
    <property type="match status" value="1"/>
</dbReference>
<dbReference type="FunFam" id="3.40.1380.10:FF:000002">
    <property type="entry name" value="ATP synthase gamma chain"/>
    <property type="match status" value="1"/>
</dbReference>
<dbReference type="Gene3D" id="3.40.1380.10">
    <property type="match status" value="1"/>
</dbReference>
<dbReference type="Gene3D" id="1.10.287.80">
    <property type="entry name" value="ATP synthase, gamma subunit, helix hairpin domain"/>
    <property type="match status" value="1"/>
</dbReference>
<dbReference type="HAMAP" id="MF_00815">
    <property type="entry name" value="ATP_synth_gamma_bact"/>
    <property type="match status" value="1"/>
</dbReference>
<dbReference type="InterPro" id="IPR035968">
    <property type="entry name" value="ATP_synth_F1_ATPase_gsu"/>
</dbReference>
<dbReference type="InterPro" id="IPR000131">
    <property type="entry name" value="ATP_synth_F1_gsu"/>
</dbReference>
<dbReference type="InterPro" id="IPR023632">
    <property type="entry name" value="ATP_synth_F1_gsu_CS"/>
</dbReference>
<dbReference type="NCBIfam" id="TIGR01146">
    <property type="entry name" value="ATPsyn_F1gamma"/>
    <property type="match status" value="1"/>
</dbReference>
<dbReference type="NCBIfam" id="NF004147">
    <property type="entry name" value="PRK05621.2-1"/>
    <property type="match status" value="1"/>
</dbReference>
<dbReference type="PANTHER" id="PTHR11693">
    <property type="entry name" value="ATP SYNTHASE GAMMA CHAIN"/>
    <property type="match status" value="1"/>
</dbReference>
<dbReference type="PANTHER" id="PTHR11693:SF22">
    <property type="entry name" value="ATP SYNTHASE SUBUNIT GAMMA, MITOCHONDRIAL"/>
    <property type="match status" value="1"/>
</dbReference>
<dbReference type="Pfam" id="PF00231">
    <property type="entry name" value="ATP-synt"/>
    <property type="match status" value="1"/>
</dbReference>
<dbReference type="PRINTS" id="PR00126">
    <property type="entry name" value="ATPASEGAMMA"/>
</dbReference>
<dbReference type="SUPFAM" id="SSF52943">
    <property type="entry name" value="ATP synthase (F1-ATPase), gamma subunit"/>
    <property type="match status" value="1"/>
</dbReference>
<dbReference type="PROSITE" id="PS00153">
    <property type="entry name" value="ATPASE_GAMMA"/>
    <property type="match status" value="1"/>
</dbReference>
<comment type="function">
    <text evidence="1">Produces ATP from ADP in the presence of a proton gradient across the membrane. The gamma chain is believed to be important in regulating ATPase activity and the flow of protons through the CF(0) complex.</text>
</comment>
<comment type="subunit">
    <text evidence="1">F-type ATPases have 2 components, CF(1) - the catalytic core - and CF(0) - the membrane proton channel. CF(1) has five subunits: alpha(3), beta(3), gamma(1), delta(1), epsilon(1). CF(0) has three main subunits: a, b and c.</text>
</comment>
<comment type="subcellular location">
    <subcellularLocation>
        <location evidence="1">Cell membrane</location>
        <topology evidence="1">Peripheral membrane protein</topology>
    </subcellularLocation>
</comment>
<comment type="similarity">
    <text evidence="1">Belongs to the ATPase gamma chain family.</text>
</comment>
<keyword id="KW-0066">ATP synthesis</keyword>
<keyword id="KW-1003">Cell membrane</keyword>
<keyword id="KW-0139">CF(1)</keyword>
<keyword id="KW-0375">Hydrogen ion transport</keyword>
<keyword id="KW-0406">Ion transport</keyword>
<keyword id="KW-0472">Membrane</keyword>
<keyword id="KW-1185">Reference proteome</keyword>
<keyword id="KW-0813">Transport</keyword>
<sequence length="291" mass="31853">MAGSLSEIKAKINSTEKTSKITSAMRMVSSAKLVKSEQSARDFQIYASKIRQITTDLLKAELTSGSTNPMLVSRPVKKTGYIVITSDKGLVGGYNSKILKSVMEMIEEYHADGSYSIISIGSVGSDFFKARGMNVSFELRGLADQPSFEEVGKIISQSVAMYQNEIFDELYVCYNHHVNSLTSQVRVQQMLPISDLVAEEANDEGVVGFELEPDRDTILNQLLPQFTESLIYGAIIDAKTAEHAAGMTAMQTATDNAKNVINDLTIQYNRARQAAITQEITEIVAGANALE</sequence>
<name>ATPG_STRU0</name>
<feature type="chain" id="PRO_1000148641" description="ATP synthase gamma chain">
    <location>
        <begin position="1"/>
        <end position="291"/>
    </location>
</feature>
<proteinExistence type="inferred from homology"/>
<evidence type="ECO:0000255" key="1">
    <source>
        <dbReference type="HAMAP-Rule" id="MF_00815"/>
    </source>
</evidence>
<organism>
    <name type="scientific">Streptococcus uberis (strain ATCC BAA-854 / 0140J)</name>
    <dbReference type="NCBI Taxonomy" id="218495"/>
    <lineage>
        <taxon>Bacteria</taxon>
        <taxon>Bacillati</taxon>
        <taxon>Bacillota</taxon>
        <taxon>Bacilli</taxon>
        <taxon>Lactobacillales</taxon>
        <taxon>Streptococcaceae</taxon>
        <taxon>Streptococcus</taxon>
    </lineage>
</organism>